<reference key="1">
    <citation type="journal article" date="2002" name="Nature">
        <title>Sequence and analysis of rice chromosome 4.</title>
        <authorList>
            <person name="Feng Q."/>
            <person name="Zhang Y."/>
            <person name="Hao P."/>
            <person name="Wang S."/>
            <person name="Fu G."/>
            <person name="Huang Y."/>
            <person name="Li Y."/>
            <person name="Zhu J."/>
            <person name="Liu Y."/>
            <person name="Hu X."/>
            <person name="Jia P."/>
            <person name="Zhang Y."/>
            <person name="Zhao Q."/>
            <person name="Ying K."/>
            <person name="Yu S."/>
            <person name="Tang Y."/>
            <person name="Weng Q."/>
            <person name="Zhang L."/>
            <person name="Lu Y."/>
            <person name="Mu J."/>
            <person name="Lu Y."/>
            <person name="Zhang L.S."/>
            <person name="Yu Z."/>
            <person name="Fan D."/>
            <person name="Liu X."/>
            <person name="Lu T."/>
            <person name="Li C."/>
            <person name="Wu Y."/>
            <person name="Sun T."/>
            <person name="Lei H."/>
            <person name="Li T."/>
            <person name="Hu H."/>
            <person name="Guan J."/>
            <person name="Wu M."/>
            <person name="Zhang R."/>
            <person name="Zhou B."/>
            <person name="Chen Z."/>
            <person name="Chen L."/>
            <person name="Jin Z."/>
            <person name="Wang R."/>
            <person name="Yin H."/>
            <person name="Cai Z."/>
            <person name="Ren S."/>
            <person name="Lv G."/>
            <person name="Gu W."/>
            <person name="Zhu G."/>
            <person name="Tu Y."/>
            <person name="Jia J."/>
            <person name="Zhang Y."/>
            <person name="Chen J."/>
            <person name="Kang H."/>
            <person name="Chen X."/>
            <person name="Shao C."/>
            <person name="Sun Y."/>
            <person name="Hu Q."/>
            <person name="Zhang X."/>
            <person name="Zhang W."/>
            <person name="Wang L."/>
            <person name="Ding C."/>
            <person name="Sheng H."/>
            <person name="Gu J."/>
            <person name="Chen S."/>
            <person name="Ni L."/>
            <person name="Zhu F."/>
            <person name="Chen W."/>
            <person name="Lan L."/>
            <person name="Lai Y."/>
            <person name="Cheng Z."/>
            <person name="Gu M."/>
            <person name="Jiang J."/>
            <person name="Li J."/>
            <person name="Hong G."/>
            <person name="Xue Y."/>
            <person name="Han B."/>
        </authorList>
    </citation>
    <scope>NUCLEOTIDE SEQUENCE [LARGE SCALE GENOMIC DNA]</scope>
    <source>
        <strain>cv. Nipponbare</strain>
    </source>
</reference>
<reference key="2">
    <citation type="journal article" date="2005" name="Nature">
        <title>The map-based sequence of the rice genome.</title>
        <authorList>
            <consortium name="International rice genome sequencing project (IRGSP)"/>
        </authorList>
    </citation>
    <scope>NUCLEOTIDE SEQUENCE [LARGE SCALE GENOMIC DNA]</scope>
    <source>
        <strain>cv. Nipponbare</strain>
    </source>
</reference>
<reference key="3">
    <citation type="journal article" date="2013" name="Rice">
        <title>Improvement of the Oryza sativa Nipponbare reference genome using next generation sequence and optical map data.</title>
        <authorList>
            <person name="Kawahara Y."/>
            <person name="de la Bastide M."/>
            <person name="Hamilton J.P."/>
            <person name="Kanamori H."/>
            <person name="McCombie W.R."/>
            <person name="Ouyang S."/>
            <person name="Schwartz D.C."/>
            <person name="Tanaka T."/>
            <person name="Wu J."/>
            <person name="Zhou S."/>
            <person name="Childs K.L."/>
            <person name="Davidson R.M."/>
            <person name="Lin H."/>
            <person name="Quesada-Ocampo L."/>
            <person name="Vaillancourt B."/>
            <person name="Sakai H."/>
            <person name="Lee S.S."/>
            <person name="Kim J."/>
            <person name="Numa H."/>
            <person name="Itoh T."/>
            <person name="Buell C.R."/>
            <person name="Matsumoto T."/>
        </authorList>
    </citation>
    <scope>GENOME REANNOTATION</scope>
    <source>
        <strain>cv. Nipponbare</strain>
    </source>
</reference>
<reference key="4">
    <citation type="journal article" date="2005" name="Plant Cell Rep.">
        <title>Molecular cloning and expression analysis of the cell-wall invertase gene family in rice (Oryza sativa L.).</title>
        <authorList>
            <person name="Cho J.-I."/>
            <person name="Lee S.-K."/>
            <person name="Ko S."/>
            <person name="Kim H.-K."/>
            <person name="Jun S.-H."/>
            <person name="Lee Y.-H."/>
            <person name="Bhoo S.H."/>
            <person name="Lee K.-W."/>
            <person name="An G."/>
            <person name="Hahn T.-R."/>
            <person name="Jeon J.-S."/>
        </authorList>
    </citation>
    <scope>NUCLEOTIDE SEQUENCE [MRNA] OF 17-542</scope>
    <scope>TISSUE SPECIFICITY</scope>
    <scope>INDUCTION</scope>
    <source>
        <strain>cv. Nipponbare</strain>
    </source>
</reference>
<dbReference type="EC" id="3.2.1.26"/>
<dbReference type="EMBL" id="AL606646">
    <property type="protein sequence ID" value="CAE03581.1"/>
    <property type="status" value="ALT_SEQ"/>
    <property type="molecule type" value="Genomic_DNA"/>
</dbReference>
<dbReference type="EMBL" id="AP014960">
    <property type="status" value="NOT_ANNOTATED_CDS"/>
    <property type="molecule type" value="Genomic_DNA"/>
</dbReference>
<dbReference type="EMBL" id="AY578162">
    <property type="protein sequence ID" value="AAT84405.1"/>
    <property type="status" value="ALT_INIT"/>
    <property type="molecule type" value="mRNA"/>
</dbReference>
<dbReference type="SMR" id="Q56UD1"/>
<dbReference type="FunCoup" id="Q56UD1">
    <property type="interactions" value="11"/>
</dbReference>
<dbReference type="STRING" id="39947.Q56UD1"/>
<dbReference type="GlyCosmos" id="Q56UD1">
    <property type="glycosylation" value="3 sites, No reported glycans"/>
</dbReference>
<dbReference type="PaxDb" id="39947-Q56UD1"/>
<dbReference type="eggNOG" id="KOG0228">
    <property type="taxonomic scope" value="Eukaryota"/>
</dbReference>
<dbReference type="InParanoid" id="Q56UD1"/>
<dbReference type="Proteomes" id="UP000000763">
    <property type="component" value="Chromosome 4"/>
</dbReference>
<dbReference type="Proteomes" id="UP000059680">
    <property type="component" value="Chromosome 4"/>
</dbReference>
<dbReference type="GO" id="GO:0048046">
    <property type="term" value="C:apoplast"/>
    <property type="evidence" value="ECO:0007669"/>
    <property type="project" value="UniProtKB-SubCell"/>
</dbReference>
<dbReference type="GO" id="GO:0004564">
    <property type="term" value="F:beta-fructofuranosidase activity"/>
    <property type="evidence" value="ECO:0007669"/>
    <property type="project" value="UniProtKB-EC"/>
</dbReference>
<dbReference type="GO" id="GO:0005975">
    <property type="term" value="P:carbohydrate metabolic process"/>
    <property type="evidence" value="ECO:0007669"/>
    <property type="project" value="InterPro"/>
</dbReference>
<dbReference type="CDD" id="cd18624">
    <property type="entry name" value="GH32_Fruct1-like"/>
    <property type="match status" value="1"/>
</dbReference>
<dbReference type="FunFam" id="2.60.120.560:FF:000002">
    <property type="entry name" value="Beta-fructofuranosidase, insoluble isoenzyme CWINV1"/>
    <property type="match status" value="1"/>
</dbReference>
<dbReference type="Gene3D" id="2.60.120.560">
    <property type="entry name" value="Exo-inulinase, domain 1"/>
    <property type="match status" value="1"/>
</dbReference>
<dbReference type="Gene3D" id="2.115.10.20">
    <property type="entry name" value="Glycosyl hydrolase domain, family 43"/>
    <property type="match status" value="1"/>
</dbReference>
<dbReference type="InterPro" id="IPR013320">
    <property type="entry name" value="ConA-like_dom_sf"/>
</dbReference>
<dbReference type="InterPro" id="IPR050551">
    <property type="entry name" value="Fructan_Metab_Enzymes"/>
</dbReference>
<dbReference type="InterPro" id="IPR001362">
    <property type="entry name" value="Glyco_hydro_32"/>
</dbReference>
<dbReference type="InterPro" id="IPR013189">
    <property type="entry name" value="Glyco_hydro_32_C"/>
</dbReference>
<dbReference type="InterPro" id="IPR013148">
    <property type="entry name" value="Glyco_hydro_32_N"/>
</dbReference>
<dbReference type="InterPro" id="IPR023296">
    <property type="entry name" value="Glyco_hydro_beta-prop_sf"/>
</dbReference>
<dbReference type="PANTHER" id="PTHR31953">
    <property type="entry name" value="BETA-FRUCTOFURANOSIDASE, INSOLUBLE ISOENZYME CWINV1-RELATED"/>
    <property type="match status" value="1"/>
</dbReference>
<dbReference type="Pfam" id="PF08244">
    <property type="entry name" value="Glyco_hydro_32C"/>
    <property type="match status" value="1"/>
</dbReference>
<dbReference type="Pfam" id="PF00251">
    <property type="entry name" value="Glyco_hydro_32N"/>
    <property type="match status" value="1"/>
</dbReference>
<dbReference type="SMART" id="SM00640">
    <property type="entry name" value="Glyco_32"/>
    <property type="match status" value="1"/>
</dbReference>
<dbReference type="SUPFAM" id="SSF75005">
    <property type="entry name" value="Arabinanase/levansucrase/invertase"/>
    <property type="match status" value="1"/>
</dbReference>
<dbReference type="SUPFAM" id="SSF49899">
    <property type="entry name" value="Concanavalin A-like lectins/glucanases"/>
    <property type="match status" value="1"/>
</dbReference>
<accession>Q56UD1</accession>
<accession>Q7XPK5</accession>
<comment type="function">
    <text>May play a role in stress response.</text>
</comment>
<comment type="catalytic activity">
    <reaction>
        <text>Hydrolysis of terminal non-reducing beta-D-fructofuranoside residues in beta-D-fructofuranosides.</text>
        <dbReference type="EC" id="3.2.1.26"/>
    </reaction>
</comment>
<comment type="subcellular location">
    <subcellularLocation>
        <location evidence="4">Secreted</location>
        <location evidence="4">Extracellular space</location>
        <location evidence="4">Apoplast</location>
    </subcellularLocation>
    <subcellularLocation>
        <location evidence="4">Secreted</location>
        <location evidence="4">Cell wall</location>
    </subcellularLocation>
    <text evidence="4">Associated to the cell wall.</text>
</comment>
<comment type="tissue specificity">
    <text evidence="3">Expressed in roots and leaves.</text>
</comment>
<comment type="induction">
    <text evidence="3">By rice blast fungus (M.grisea) 48 hours after infection. Down-regulated by sucrose in excised leaves.</text>
</comment>
<comment type="similarity">
    <text evidence="4">Belongs to the glycosyl hydrolase 32 family.</text>
</comment>
<comment type="sequence caution" evidence="4">
    <conflict type="erroneous initiation">
        <sequence resource="EMBL-CDS" id="AAT84405"/>
    </conflict>
</comment>
<comment type="sequence caution" evidence="4">
    <conflict type="erroneous gene model prediction">
        <sequence resource="EMBL-CDS" id="CAE03581"/>
    </conflict>
</comment>
<gene>
    <name type="primary">CIN5</name>
    <name type="ordered locus">Os04g0664900</name>
    <name type="ordered locus">LOC_Os04g56930</name>
    <name type="ORF">OSJNBa0087O24.4</name>
</gene>
<name>INV5_ORYSJ</name>
<sequence>MQLLVPIYKRHSNSNFKVSSCSSSPMCPVNGKLQLHDGRTAYHFQPAKFWQNDPNGPLYHNGLYHFFYQYNPHGPLWDTGKLSWGHSVSGDLVNWAFLGTAIDPTDPFDVNGCWSGSATVLLGGRPAFLYTGRDAGGVQVQNVSFAKNPLDPLLREWEKPSCNPIIAFPADVINNNFRDPTTAWLGRDGLWRMVVAAEVAGAGSALVYRSADFLRWERNAAPMHSSAAVPVLECPDFFPVAEHGIDGLDTSANGGGTGVKHVLKLSEFDTHQDFYMVGRNRRVQWLWVNEYDSKADDVAKGWAGVQAFPRKVWLDGDGKQLLQWPVDEIETLRTKRVGLQGTEVKAGGLHEIVGVASSQADVEVVFEIPNLEDEAESFDPDWLDPHKLCKDKGAASAHGGVGPFGLIVMASGDLQEQTAVFFRVFKHHGKYKVFMCTDLTRSSTKADVYKDAYGGFVDVDIQKDKSISLRTLIDHSMIESFGGGGRACITTRVYPEHAATSSSHLYVFNNGSGTVNVSKLEAWEMATATVNSADALDAITRS</sequence>
<organism>
    <name type="scientific">Oryza sativa subsp. japonica</name>
    <name type="common">Rice</name>
    <dbReference type="NCBI Taxonomy" id="39947"/>
    <lineage>
        <taxon>Eukaryota</taxon>
        <taxon>Viridiplantae</taxon>
        <taxon>Streptophyta</taxon>
        <taxon>Embryophyta</taxon>
        <taxon>Tracheophyta</taxon>
        <taxon>Spermatophyta</taxon>
        <taxon>Magnoliopsida</taxon>
        <taxon>Liliopsida</taxon>
        <taxon>Poales</taxon>
        <taxon>Poaceae</taxon>
        <taxon>BOP clade</taxon>
        <taxon>Oryzoideae</taxon>
        <taxon>Oryzeae</taxon>
        <taxon>Oryzinae</taxon>
        <taxon>Oryza</taxon>
        <taxon>Oryza sativa</taxon>
    </lineage>
</organism>
<keyword id="KW-0052">Apoplast</keyword>
<keyword id="KW-0134">Cell wall</keyword>
<keyword id="KW-1015">Disulfide bond</keyword>
<keyword id="KW-0325">Glycoprotein</keyword>
<keyword id="KW-0326">Glycosidase</keyword>
<keyword id="KW-0378">Hydrolase</keyword>
<keyword id="KW-1185">Reference proteome</keyword>
<keyword id="KW-0964">Secreted</keyword>
<evidence type="ECO:0000250" key="1"/>
<evidence type="ECO:0000255" key="2"/>
<evidence type="ECO:0000269" key="3">
    <source>
    </source>
</evidence>
<evidence type="ECO:0000305" key="4"/>
<proteinExistence type="evidence at transcript level"/>
<protein>
    <recommendedName>
        <fullName>Beta-fructofuranosidase, insoluble isoenzyme 5</fullName>
        <ecNumber>3.2.1.26</ecNumber>
    </recommendedName>
    <alternativeName>
        <fullName>Cell wall beta-fructosidase 5</fullName>
    </alternativeName>
    <alternativeName>
        <fullName>Invertase 5</fullName>
    </alternativeName>
    <alternativeName>
        <fullName>OsCIN5</fullName>
    </alternativeName>
    <alternativeName>
        <fullName>Sucrose hydrolase 5</fullName>
    </alternativeName>
</protein>
<feature type="chain" id="PRO_0000169867" description="Beta-fructofuranosidase, insoluble isoenzyme 5">
    <location>
        <begin position="1"/>
        <end position="542"/>
    </location>
</feature>
<feature type="active site" evidence="1">
    <location>
        <position position="53"/>
    </location>
</feature>
<feature type="binding site" evidence="1">
    <location>
        <begin position="50"/>
        <end position="53"/>
    </location>
    <ligand>
        <name>substrate</name>
    </ligand>
</feature>
<feature type="binding site" evidence="1">
    <location>
        <position position="69"/>
    </location>
    <ligand>
        <name>substrate</name>
    </ligand>
</feature>
<feature type="binding site" evidence="1">
    <location>
        <position position="77"/>
    </location>
    <ligand>
        <name>substrate</name>
    </ligand>
</feature>
<feature type="binding site" evidence="1">
    <location>
        <begin position="114"/>
        <end position="115"/>
    </location>
    <ligand>
        <name>substrate</name>
    </ligand>
</feature>
<feature type="binding site" evidence="1">
    <location>
        <begin position="178"/>
        <end position="179"/>
    </location>
    <ligand>
        <name>substrate</name>
    </ligand>
</feature>
<feature type="binding site" evidence="1">
    <location>
        <position position="233"/>
    </location>
    <ligand>
        <name>substrate</name>
    </ligand>
</feature>
<feature type="glycosylation site" description="N-linked (GlcNAc...) asparagine" evidence="2">
    <location>
        <position position="142"/>
    </location>
</feature>
<feature type="glycosylation site" description="N-linked (GlcNAc...) asparagine" evidence="2">
    <location>
        <position position="510"/>
    </location>
</feature>
<feature type="glycosylation site" description="N-linked (GlcNAc...) asparagine" evidence="2">
    <location>
        <position position="516"/>
    </location>
</feature>
<feature type="disulfide bond" evidence="1">
    <location>
        <begin position="389"/>
        <end position="436"/>
    </location>
</feature>